<sequence length="137" mass="15296">MRILGLDVGTKTVGVAISDEMGWTAQGLETIKINEERGQFGFDRISELVKQYDVDKIVVGLPKNMNGTIGPRGEACQQFAENLRELLQLDVVMWDERLSTMAAERLLISADVSRKKRKQVIDKMAAVVILQGFLDSK</sequence>
<feature type="chain" id="PRO_0000172020" description="Putative pre-16S rRNA nuclease">
    <location>
        <begin position="1"/>
        <end position="137"/>
    </location>
</feature>
<organism>
    <name type="scientific">Bacillus thuringiensis subsp. konkukian (strain 97-27)</name>
    <dbReference type="NCBI Taxonomy" id="281309"/>
    <lineage>
        <taxon>Bacteria</taxon>
        <taxon>Bacillati</taxon>
        <taxon>Bacillota</taxon>
        <taxon>Bacilli</taxon>
        <taxon>Bacillales</taxon>
        <taxon>Bacillaceae</taxon>
        <taxon>Bacillus</taxon>
        <taxon>Bacillus cereus group</taxon>
    </lineage>
</organism>
<protein>
    <recommendedName>
        <fullName evidence="1">Putative pre-16S rRNA nuclease</fullName>
        <ecNumber evidence="1">3.1.-.-</ecNumber>
    </recommendedName>
</protein>
<dbReference type="EC" id="3.1.-.-" evidence="1"/>
<dbReference type="EMBL" id="AE017355">
    <property type="protein sequence ID" value="AAT60825.1"/>
    <property type="molecule type" value="Genomic_DNA"/>
</dbReference>
<dbReference type="RefSeq" id="YP_038437.1">
    <property type="nucleotide sequence ID" value="NC_005957.1"/>
</dbReference>
<dbReference type="SMR" id="Q6HDD9"/>
<dbReference type="KEGG" id="btk:BT9727_4119"/>
<dbReference type="PATRIC" id="fig|281309.8.peg.4396"/>
<dbReference type="HOGENOM" id="CLU_098240_2_0_9"/>
<dbReference type="Proteomes" id="UP000001301">
    <property type="component" value="Chromosome"/>
</dbReference>
<dbReference type="GO" id="GO:0005829">
    <property type="term" value="C:cytosol"/>
    <property type="evidence" value="ECO:0007669"/>
    <property type="project" value="TreeGrafter"/>
</dbReference>
<dbReference type="GO" id="GO:0004518">
    <property type="term" value="F:nuclease activity"/>
    <property type="evidence" value="ECO:0007669"/>
    <property type="project" value="UniProtKB-KW"/>
</dbReference>
<dbReference type="GO" id="GO:0000967">
    <property type="term" value="P:rRNA 5'-end processing"/>
    <property type="evidence" value="ECO:0007669"/>
    <property type="project" value="UniProtKB-UniRule"/>
</dbReference>
<dbReference type="CDD" id="cd16964">
    <property type="entry name" value="YqgF"/>
    <property type="match status" value="1"/>
</dbReference>
<dbReference type="FunFam" id="3.30.420.140:FF:000003">
    <property type="entry name" value="Putative pre-16S rRNA nuclease"/>
    <property type="match status" value="1"/>
</dbReference>
<dbReference type="Gene3D" id="3.30.420.140">
    <property type="entry name" value="YqgF/RNase H-like domain"/>
    <property type="match status" value="1"/>
</dbReference>
<dbReference type="HAMAP" id="MF_00651">
    <property type="entry name" value="Nuclease_YqgF"/>
    <property type="match status" value="1"/>
</dbReference>
<dbReference type="InterPro" id="IPR012337">
    <property type="entry name" value="RNaseH-like_sf"/>
</dbReference>
<dbReference type="InterPro" id="IPR005227">
    <property type="entry name" value="YqgF"/>
</dbReference>
<dbReference type="InterPro" id="IPR006641">
    <property type="entry name" value="YqgF/RNaseH-like_dom"/>
</dbReference>
<dbReference type="InterPro" id="IPR037027">
    <property type="entry name" value="YqgF/RNaseH-like_dom_sf"/>
</dbReference>
<dbReference type="NCBIfam" id="TIGR00250">
    <property type="entry name" value="RNAse_H_YqgF"/>
    <property type="match status" value="1"/>
</dbReference>
<dbReference type="PANTHER" id="PTHR33317">
    <property type="entry name" value="POLYNUCLEOTIDYL TRANSFERASE, RIBONUCLEASE H-LIKE SUPERFAMILY PROTEIN"/>
    <property type="match status" value="1"/>
</dbReference>
<dbReference type="PANTHER" id="PTHR33317:SF4">
    <property type="entry name" value="POLYNUCLEOTIDYL TRANSFERASE, RIBONUCLEASE H-LIKE SUPERFAMILY PROTEIN"/>
    <property type="match status" value="1"/>
</dbReference>
<dbReference type="Pfam" id="PF03652">
    <property type="entry name" value="RuvX"/>
    <property type="match status" value="1"/>
</dbReference>
<dbReference type="SMART" id="SM00732">
    <property type="entry name" value="YqgFc"/>
    <property type="match status" value="1"/>
</dbReference>
<dbReference type="SUPFAM" id="SSF53098">
    <property type="entry name" value="Ribonuclease H-like"/>
    <property type="match status" value="1"/>
</dbReference>
<keyword id="KW-0963">Cytoplasm</keyword>
<keyword id="KW-0378">Hydrolase</keyword>
<keyword id="KW-0540">Nuclease</keyword>
<keyword id="KW-0690">Ribosome biogenesis</keyword>
<name>YQGF_BACHK</name>
<comment type="function">
    <text evidence="1">Could be a nuclease involved in processing of the 5'-end of pre-16S rRNA.</text>
</comment>
<comment type="subcellular location">
    <subcellularLocation>
        <location evidence="1">Cytoplasm</location>
    </subcellularLocation>
</comment>
<comment type="similarity">
    <text evidence="1">Belongs to the YqgF nuclease family.</text>
</comment>
<proteinExistence type="inferred from homology"/>
<reference key="1">
    <citation type="journal article" date="2006" name="J. Bacteriol.">
        <title>Pathogenomic sequence analysis of Bacillus cereus and Bacillus thuringiensis isolates closely related to Bacillus anthracis.</title>
        <authorList>
            <person name="Han C.S."/>
            <person name="Xie G."/>
            <person name="Challacombe J.F."/>
            <person name="Altherr M.R."/>
            <person name="Bhotika S.S."/>
            <person name="Bruce D."/>
            <person name="Campbell C.S."/>
            <person name="Campbell M.L."/>
            <person name="Chen J."/>
            <person name="Chertkov O."/>
            <person name="Cleland C."/>
            <person name="Dimitrijevic M."/>
            <person name="Doggett N.A."/>
            <person name="Fawcett J.J."/>
            <person name="Glavina T."/>
            <person name="Goodwin L.A."/>
            <person name="Hill K.K."/>
            <person name="Hitchcock P."/>
            <person name="Jackson P.J."/>
            <person name="Keim P."/>
            <person name="Kewalramani A.R."/>
            <person name="Longmire J."/>
            <person name="Lucas S."/>
            <person name="Malfatti S."/>
            <person name="McMurry K."/>
            <person name="Meincke L.J."/>
            <person name="Misra M."/>
            <person name="Moseman B.L."/>
            <person name="Mundt M."/>
            <person name="Munk A.C."/>
            <person name="Okinaka R.T."/>
            <person name="Parson-Quintana B."/>
            <person name="Reilly L.P."/>
            <person name="Richardson P."/>
            <person name="Robinson D.L."/>
            <person name="Rubin E."/>
            <person name="Saunders E."/>
            <person name="Tapia R."/>
            <person name="Tesmer J.G."/>
            <person name="Thayer N."/>
            <person name="Thompson L.S."/>
            <person name="Tice H."/>
            <person name="Ticknor L.O."/>
            <person name="Wills P.L."/>
            <person name="Brettin T.S."/>
            <person name="Gilna P."/>
        </authorList>
    </citation>
    <scope>NUCLEOTIDE SEQUENCE [LARGE SCALE GENOMIC DNA]</scope>
    <source>
        <strain>97-27</strain>
    </source>
</reference>
<gene>
    <name type="ordered locus">BT9727_4119</name>
</gene>
<evidence type="ECO:0000255" key="1">
    <source>
        <dbReference type="HAMAP-Rule" id="MF_00651"/>
    </source>
</evidence>
<accession>Q6HDD9</accession>